<proteinExistence type="inferred from homology"/>
<reference key="1">
    <citation type="journal article" date="1998" name="Science">
        <title>Complete genome sequence of Treponema pallidum, the syphilis spirochete.</title>
        <authorList>
            <person name="Fraser C.M."/>
            <person name="Norris S.J."/>
            <person name="Weinstock G.M."/>
            <person name="White O."/>
            <person name="Sutton G.G."/>
            <person name="Dodson R.J."/>
            <person name="Gwinn M.L."/>
            <person name="Hickey E.K."/>
            <person name="Clayton R.A."/>
            <person name="Ketchum K.A."/>
            <person name="Sodergren E."/>
            <person name="Hardham J.M."/>
            <person name="McLeod M.P."/>
            <person name="Salzberg S.L."/>
            <person name="Peterson J.D."/>
            <person name="Khalak H.G."/>
            <person name="Richardson D.L."/>
            <person name="Howell J.K."/>
            <person name="Chidambaram M."/>
            <person name="Utterback T.R."/>
            <person name="McDonald L.A."/>
            <person name="Artiach P."/>
            <person name="Bowman C."/>
            <person name="Cotton M.D."/>
            <person name="Fujii C."/>
            <person name="Garland S.A."/>
            <person name="Hatch B."/>
            <person name="Horst K."/>
            <person name="Roberts K.M."/>
            <person name="Sandusky M."/>
            <person name="Weidman J.F."/>
            <person name="Smith H.O."/>
            <person name="Venter J.C."/>
        </authorList>
    </citation>
    <scope>NUCLEOTIDE SEQUENCE [LARGE SCALE GENOMIC DNA]</scope>
    <source>
        <strain>Nichols</strain>
    </source>
</reference>
<accession>O83514</accession>
<feature type="chain" id="PRO_0000062721" description="Peptidoglycan glycosyltransferase RodA">
    <location>
        <begin position="1"/>
        <end position="433"/>
    </location>
</feature>
<feature type="transmembrane region" description="Helical" evidence="1">
    <location>
        <begin position="9"/>
        <end position="29"/>
    </location>
</feature>
<feature type="transmembrane region" description="Helical" evidence="1">
    <location>
        <begin position="44"/>
        <end position="64"/>
    </location>
</feature>
<feature type="transmembrane region" description="Helical" evidence="1">
    <location>
        <begin position="74"/>
        <end position="94"/>
    </location>
</feature>
<feature type="transmembrane region" description="Helical" evidence="1">
    <location>
        <begin position="100"/>
        <end position="120"/>
    </location>
</feature>
<feature type="transmembrane region" description="Helical" evidence="1">
    <location>
        <begin position="158"/>
        <end position="178"/>
    </location>
</feature>
<feature type="transmembrane region" description="Helical" evidence="1">
    <location>
        <begin position="181"/>
        <end position="201"/>
    </location>
</feature>
<feature type="transmembrane region" description="Helical" evidence="1">
    <location>
        <begin position="221"/>
        <end position="241"/>
    </location>
</feature>
<feature type="transmembrane region" description="Helical" evidence="1">
    <location>
        <begin position="249"/>
        <end position="269"/>
    </location>
</feature>
<feature type="transmembrane region" description="Helical" evidence="1">
    <location>
        <begin position="295"/>
        <end position="315"/>
    </location>
</feature>
<feature type="transmembrane region" description="Helical" evidence="1">
    <location>
        <begin position="341"/>
        <end position="361"/>
    </location>
</feature>
<feature type="transmembrane region" description="Helical" evidence="1">
    <location>
        <begin position="378"/>
        <end position="398"/>
    </location>
</feature>
<feature type="transmembrane region" description="Helical" evidence="1">
    <location>
        <begin position="400"/>
        <end position="420"/>
    </location>
</feature>
<organism>
    <name type="scientific">Treponema pallidum (strain Nichols)</name>
    <dbReference type="NCBI Taxonomy" id="243276"/>
    <lineage>
        <taxon>Bacteria</taxon>
        <taxon>Pseudomonadati</taxon>
        <taxon>Spirochaetota</taxon>
        <taxon>Spirochaetia</taxon>
        <taxon>Spirochaetales</taxon>
        <taxon>Treponemataceae</taxon>
        <taxon>Treponema</taxon>
    </lineage>
</organism>
<name>RODA_TREPA</name>
<sequence>MRIRGVSDFDYLLLLTMLALTSIGILFIYSSGVNSEGHVISREYLKQIVWAVMGVVLMLSVSMYDYHRFKDRTTLIFAGFILLLIYTRLFGRYVNGAKSWIGVGEFGIQISEFAKIAYILYLAHYLVYSQSEPMLKRFAKAGVITLLPMALILSQPDLGTASVYLPIFLVMCFIAGFPLRLIFAVVCVVLLTLLFTLLPLWEQTFLQYQGVATRIADSRMLSLFVFFSLSATSAVAVVGYLLSGRKYYYWITYALGMVSISYGASLLGVRVLKPYQMMRLIIFLNPEVDPLKAGWHIIQSMIAIGSGGAFGMGYLRGPQSHYRFLPQQSTDFIFSILSEEWGFVGGVIVFGLYLLFFLHTLSIMSHVDDLYGKLIASGVLGMFLFHFVVNVGMTMGIMPITGIPLLLLSYGGSSLWTAMIATGLLMSINARQL</sequence>
<dbReference type="EC" id="2.4.99.28" evidence="1"/>
<dbReference type="EMBL" id="AE000520">
    <property type="protein sequence ID" value="AAC65488.1"/>
    <property type="molecule type" value="Genomic_DNA"/>
</dbReference>
<dbReference type="PIR" id="A71317">
    <property type="entry name" value="A71317"/>
</dbReference>
<dbReference type="RefSeq" id="WP_010881950.1">
    <property type="nucleotide sequence ID" value="NC_021490.2"/>
</dbReference>
<dbReference type="SMR" id="O83514"/>
<dbReference type="IntAct" id="O83514">
    <property type="interactions" value="11"/>
</dbReference>
<dbReference type="STRING" id="243276.TP_0501"/>
<dbReference type="EnsemblBacteria" id="AAC65488">
    <property type="protein sequence ID" value="AAC65488"/>
    <property type="gene ID" value="TP_0501"/>
</dbReference>
<dbReference type="GeneID" id="93876268"/>
<dbReference type="KEGG" id="tpa:TP_0501"/>
<dbReference type="KEGG" id="tpw:TPANIC_0501"/>
<dbReference type="eggNOG" id="COG0772">
    <property type="taxonomic scope" value="Bacteria"/>
</dbReference>
<dbReference type="HOGENOM" id="CLU_029243_2_2_12"/>
<dbReference type="OrthoDB" id="9812661at2"/>
<dbReference type="UniPathway" id="UPA00219"/>
<dbReference type="Proteomes" id="UP000000811">
    <property type="component" value="Chromosome"/>
</dbReference>
<dbReference type="GO" id="GO:0032153">
    <property type="term" value="C:cell division site"/>
    <property type="evidence" value="ECO:0007669"/>
    <property type="project" value="TreeGrafter"/>
</dbReference>
<dbReference type="GO" id="GO:0005886">
    <property type="term" value="C:plasma membrane"/>
    <property type="evidence" value="ECO:0007669"/>
    <property type="project" value="UniProtKB-SubCell"/>
</dbReference>
<dbReference type="GO" id="GO:0015648">
    <property type="term" value="F:lipid-linked peptidoglycan transporter activity"/>
    <property type="evidence" value="ECO:0007669"/>
    <property type="project" value="TreeGrafter"/>
</dbReference>
<dbReference type="GO" id="GO:0008955">
    <property type="term" value="F:peptidoglycan glycosyltransferase activity"/>
    <property type="evidence" value="ECO:0007669"/>
    <property type="project" value="UniProtKB-UniRule"/>
</dbReference>
<dbReference type="GO" id="GO:0051301">
    <property type="term" value="P:cell division"/>
    <property type="evidence" value="ECO:0007669"/>
    <property type="project" value="InterPro"/>
</dbReference>
<dbReference type="GO" id="GO:0071555">
    <property type="term" value="P:cell wall organization"/>
    <property type="evidence" value="ECO:0007669"/>
    <property type="project" value="UniProtKB-KW"/>
</dbReference>
<dbReference type="GO" id="GO:0009252">
    <property type="term" value="P:peptidoglycan biosynthetic process"/>
    <property type="evidence" value="ECO:0007669"/>
    <property type="project" value="UniProtKB-UniRule"/>
</dbReference>
<dbReference type="GO" id="GO:0008360">
    <property type="term" value="P:regulation of cell shape"/>
    <property type="evidence" value="ECO:0007669"/>
    <property type="project" value="UniProtKB-KW"/>
</dbReference>
<dbReference type="HAMAP" id="MF_02079">
    <property type="entry name" value="PGT_RodA"/>
    <property type="match status" value="1"/>
</dbReference>
<dbReference type="InterPro" id="IPR018365">
    <property type="entry name" value="Cell_cycle_FtsW-rel_CS"/>
</dbReference>
<dbReference type="InterPro" id="IPR001182">
    <property type="entry name" value="FtsW/RodA"/>
</dbReference>
<dbReference type="InterPro" id="IPR011923">
    <property type="entry name" value="RodA/MrdB"/>
</dbReference>
<dbReference type="NCBIfam" id="NF037961">
    <property type="entry name" value="RodA_shape"/>
    <property type="match status" value="1"/>
</dbReference>
<dbReference type="NCBIfam" id="TIGR02210">
    <property type="entry name" value="rodA_shape"/>
    <property type="match status" value="1"/>
</dbReference>
<dbReference type="PANTHER" id="PTHR30474">
    <property type="entry name" value="CELL CYCLE PROTEIN"/>
    <property type="match status" value="1"/>
</dbReference>
<dbReference type="PANTHER" id="PTHR30474:SF1">
    <property type="entry name" value="PEPTIDOGLYCAN GLYCOSYLTRANSFERASE MRDB"/>
    <property type="match status" value="1"/>
</dbReference>
<dbReference type="Pfam" id="PF01098">
    <property type="entry name" value="FTSW_RODA_SPOVE"/>
    <property type="match status" value="2"/>
</dbReference>
<dbReference type="PROSITE" id="PS00428">
    <property type="entry name" value="FTSW_RODA_SPOVE"/>
    <property type="match status" value="1"/>
</dbReference>
<evidence type="ECO:0000255" key="1">
    <source>
        <dbReference type="HAMAP-Rule" id="MF_02079"/>
    </source>
</evidence>
<gene>
    <name evidence="1" type="primary">rodA</name>
    <name type="synonym">mrdB</name>
    <name type="ordered locus">TP_0501</name>
</gene>
<keyword id="KW-0997">Cell inner membrane</keyword>
<keyword id="KW-1003">Cell membrane</keyword>
<keyword id="KW-0133">Cell shape</keyword>
<keyword id="KW-0961">Cell wall biogenesis/degradation</keyword>
<keyword id="KW-0328">Glycosyltransferase</keyword>
<keyword id="KW-0472">Membrane</keyword>
<keyword id="KW-0573">Peptidoglycan synthesis</keyword>
<keyword id="KW-1185">Reference proteome</keyword>
<keyword id="KW-0808">Transferase</keyword>
<keyword id="KW-0812">Transmembrane</keyword>
<keyword id="KW-1133">Transmembrane helix</keyword>
<comment type="function">
    <text evidence="1">Peptidoglycan polymerase that is essential for cell wall elongation.</text>
</comment>
<comment type="catalytic activity">
    <reaction evidence="1">
        <text>[GlcNAc-(1-&gt;4)-Mur2Ac(oyl-L-Ala-gamma-D-Glu-L-Lys-D-Ala-D-Ala)](n)-di-trans,octa-cis-undecaprenyl diphosphate + beta-D-GlcNAc-(1-&gt;4)-Mur2Ac(oyl-L-Ala-gamma-D-Glu-L-Lys-D-Ala-D-Ala)-di-trans,octa-cis-undecaprenyl diphosphate = [GlcNAc-(1-&gt;4)-Mur2Ac(oyl-L-Ala-gamma-D-Glu-L-Lys-D-Ala-D-Ala)](n+1)-di-trans,octa-cis-undecaprenyl diphosphate + di-trans,octa-cis-undecaprenyl diphosphate + H(+)</text>
        <dbReference type="Rhea" id="RHEA:23708"/>
        <dbReference type="Rhea" id="RHEA-COMP:9602"/>
        <dbReference type="Rhea" id="RHEA-COMP:9603"/>
        <dbReference type="ChEBI" id="CHEBI:15378"/>
        <dbReference type="ChEBI" id="CHEBI:58405"/>
        <dbReference type="ChEBI" id="CHEBI:60033"/>
        <dbReference type="ChEBI" id="CHEBI:78435"/>
        <dbReference type="EC" id="2.4.99.28"/>
    </reaction>
</comment>
<comment type="pathway">
    <text evidence="1">Cell wall biogenesis; peptidoglycan biosynthesis.</text>
</comment>
<comment type="subcellular location">
    <subcellularLocation>
        <location evidence="1">Cell inner membrane</location>
        <topology evidence="1">Multi-pass membrane protein</topology>
    </subcellularLocation>
</comment>
<comment type="similarity">
    <text evidence="1">Belongs to the SEDS family. MrdB/RodA subfamily.</text>
</comment>
<protein>
    <recommendedName>
        <fullName evidence="1">Peptidoglycan glycosyltransferase RodA</fullName>
        <shortName evidence="1">PGT</shortName>
        <ecNumber evidence="1">2.4.99.28</ecNumber>
    </recommendedName>
    <alternativeName>
        <fullName evidence="1">Cell elongation protein RodA</fullName>
    </alternativeName>
    <alternativeName>
        <fullName evidence="1">Cell wall polymerase</fullName>
    </alternativeName>
    <alternativeName>
        <fullName evidence="1">Peptidoglycan polymerase</fullName>
        <shortName evidence="1">PG polymerase</shortName>
    </alternativeName>
</protein>